<accession>Q2MY42</accession>
<keyword id="KW-0175">Coiled coil</keyword>
<keyword id="KW-0325">Glycoprotein</keyword>
<keyword id="KW-0378">Hydrolase</keyword>
<keyword id="KW-0442">Lipid degradation</keyword>
<keyword id="KW-0443">Lipid metabolism</keyword>
<keyword id="KW-0611">Plant defense</keyword>
<keyword id="KW-1185">Reference proteome</keyword>
<keyword id="KW-0732">Signal</keyword>
<keyword id="KW-0758">Storage protein</keyword>
<keyword id="KW-0926">Vacuole</keyword>
<evidence type="ECO:0000250" key="1"/>
<evidence type="ECO:0000255" key="2"/>
<evidence type="ECO:0000255" key="3">
    <source>
        <dbReference type="PROSITE-ProRule" id="PRU01161"/>
    </source>
</evidence>
<evidence type="ECO:0000269" key="4">
    <source>
    </source>
</evidence>
<evidence type="ECO:0000305" key="5"/>
<sequence length="386" mass="42628">MATTKSFLILFFMILATTSSTCAKLEEMVTVLSIDGGGIKGIIPAIILEFLEGQLQEVDNNKDARLADYFDVIGGTSTGGLLTAMITTPNENNRPFAAAKDIVPFYFEHGPHIFNYSGSIFGPRYDGKYLLQVLQEKLGETRVHQALTEVAISSFDIKTNKPVIFTKSNLAKSPELDAKMYDICYSTAAAPIYFPPHHFVTHTSNGATYEFNLVDGGVATVGDPALLSLSVATRLAQEDPAFSSIKSLDYKQMLLLSLGTGTNSEFDKTYTAEEAAKWGPLRWMLAIQQMTNAASSYMTDYYISTVFQARHSQNNYLRVQENALNGTTTEMDDASEANMELLVQVGETLLKKPVSKDSPETYEEALKRFAKLLSDRKKLRANKASY</sequence>
<organism>
    <name type="scientific">Solanum tuberosum</name>
    <name type="common">Potato</name>
    <dbReference type="NCBI Taxonomy" id="4113"/>
    <lineage>
        <taxon>Eukaryota</taxon>
        <taxon>Viridiplantae</taxon>
        <taxon>Streptophyta</taxon>
        <taxon>Embryophyta</taxon>
        <taxon>Tracheophyta</taxon>
        <taxon>Spermatophyta</taxon>
        <taxon>Magnoliopsida</taxon>
        <taxon>eudicotyledons</taxon>
        <taxon>Gunneridae</taxon>
        <taxon>Pentapetalae</taxon>
        <taxon>asterids</taxon>
        <taxon>lamiids</taxon>
        <taxon>Solanales</taxon>
        <taxon>Solanaceae</taxon>
        <taxon>Solanoideae</taxon>
        <taxon>Solaneae</taxon>
        <taxon>Solanum</taxon>
    </lineage>
</organism>
<proteinExistence type="evidence at transcript level"/>
<protein>
    <recommendedName>
        <fullName>Patatin-04/09</fullName>
        <ecNumber>3.1.1.-</ecNumber>
    </recommendedName>
</protein>
<feature type="signal peptide" evidence="2">
    <location>
        <begin position="1"/>
        <end position="23"/>
    </location>
</feature>
<feature type="chain" id="PRO_0000296690" description="Patatin-04/09">
    <location>
        <begin position="24"/>
        <end position="386"/>
    </location>
</feature>
<feature type="domain" description="PNPLA" evidence="3">
    <location>
        <begin position="32"/>
        <end position="229"/>
    </location>
</feature>
<feature type="coiled-coil region" evidence="2">
    <location>
        <begin position="321"/>
        <end position="384"/>
    </location>
</feature>
<feature type="short sequence motif" description="GXGXXG" evidence="3">
    <location>
        <begin position="36"/>
        <end position="41"/>
    </location>
</feature>
<feature type="short sequence motif" description="GXSXG" evidence="3">
    <location>
        <begin position="75"/>
        <end position="79"/>
    </location>
</feature>
<feature type="short sequence motif" description="DGA/G" evidence="3">
    <location>
        <begin position="215"/>
        <end position="217"/>
    </location>
</feature>
<feature type="active site" description="Nucleophile" evidence="3">
    <location>
        <position position="77"/>
    </location>
</feature>
<feature type="active site" description="Proton acceptor" evidence="3">
    <location>
        <position position="215"/>
    </location>
</feature>
<feature type="glycosylation site" description="N-linked (GlcNAc...) asparagine" evidence="2">
    <location>
        <position position="115"/>
    </location>
</feature>
<feature type="glycosylation site" description="N-linked (GlcNAc...) asparagine" evidence="2">
    <location>
        <position position="325"/>
    </location>
</feature>
<comment type="function">
    <text evidence="1">Probable lipolytic acyl hydrolase (LAH), an activity which is thought to be involved in the response of tubers to pathogens.</text>
</comment>
<comment type="subcellular location">
    <subcellularLocation>
        <location evidence="1">Vacuole</location>
    </subcellularLocation>
</comment>
<comment type="tissue specificity">
    <text evidence="4">Tuber.</text>
</comment>
<comment type="developmental stage">
    <text evidence="4">Accumulates progressively during tuber formation from stolon.</text>
</comment>
<comment type="domain">
    <text>The nitrogen atoms of the two glycine residues in the GGXR motif define the oxyanion hole, and stabilize the oxyanion that forms during the nucleophilic attack by the catalytic serine during substrate cleavage.</text>
</comment>
<comment type="miscellaneous">
    <text>Patatin have a dual role as a somatic storage protein and as an enzyme involved in host resistance.</text>
</comment>
<comment type="similarity">
    <text evidence="5">Belongs to the patatin family.</text>
</comment>
<reference key="1">
    <citation type="journal article" date="2006" name="Genetics">
        <title>Structural diversity and differential transcription of the patatin multicopy gene family during potato tuber development.</title>
        <authorList>
            <person name="Stupar R.M."/>
            <person name="Beaubien K.A."/>
            <person name="Jin W."/>
            <person name="Song J."/>
            <person name="Lee M.-K."/>
            <person name="Wu C."/>
            <person name="Zhang H.-B."/>
            <person name="Han B."/>
            <person name="Jiang J."/>
        </authorList>
    </citation>
    <scope>NUCLEOTIDE SEQUENCE [MRNA]</scope>
    <scope>DEVELOPMENTAL STAGE</scope>
    <scope>TISSUE SPECIFICITY</scope>
    <source>
        <strain>cv. Kennebec</strain>
    </source>
</reference>
<dbReference type="EC" id="3.1.1.-"/>
<dbReference type="EMBL" id="DQ274491">
    <property type="protein sequence ID" value="ABC55691.1"/>
    <property type="molecule type" value="mRNA"/>
</dbReference>
<dbReference type="EMBL" id="DQ274496">
    <property type="protein sequence ID" value="ABC55696.1"/>
    <property type="molecule type" value="mRNA"/>
</dbReference>
<dbReference type="SMR" id="Q2MY42"/>
<dbReference type="STRING" id="4113.Q2MY42"/>
<dbReference type="Allergome" id="639">
    <property type="allergen name" value="Sola t 1"/>
</dbReference>
<dbReference type="InParanoid" id="Q2MY42"/>
<dbReference type="Proteomes" id="UP000011115">
    <property type="component" value="Unassembled WGS sequence"/>
</dbReference>
<dbReference type="ExpressionAtlas" id="Q2MY42">
    <property type="expression patterns" value="baseline and differential"/>
</dbReference>
<dbReference type="GO" id="GO:0005773">
    <property type="term" value="C:vacuole"/>
    <property type="evidence" value="ECO:0007669"/>
    <property type="project" value="UniProtKB-SubCell"/>
</dbReference>
<dbReference type="GO" id="GO:0047372">
    <property type="term" value="F:monoacylglycerol lipase activity"/>
    <property type="evidence" value="ECO:0000318"/>
    <property type="project" value="GO_Central"/>
</dbReference>
<dbReference type="GO" id="GO:0045735">
    <property type="term" value="F:nutrient reservoir activity"/>
    <property type="evidence" value="ECO:0007669"/>
    <property type="project" value="UniProtKB-KW"/>
</dbReference>
<dbReference type="GO" id="GO:0004620">
    <property type="term" value="F:phospholipase activity"/>
    <property type="evidence" value="ECO:0000318"/>
    <property type="project" value="GO_Central"/>
</dbReference>
<dbReference type="GO" id="GO:0006952">
    <property type="term" value="P:defense response"/>
    <property type="evidence" value="ECO:0007669"/>
    <property type="project" value="UniProtKB-KW"/>
</dbReference>
<dbReference type="GO" id="GO:0016042">
    <property type="term" value="P:lipid catabolic process"/>
    <property type="evidence" value="ECO:0007669"/>
    <property type="project" value="UniProtKB-KW"/>
</dbReference>
<dbReference type="Gene3D" id="3.40.1090.10">
    <property type="entry name" value="Cytosolic phospholipase A2 catalytic domain"/>
    <property type="match status" value="1"/>
</dbReference>
<dbReference type="InterPro" id="IPR016035">
    <property type="entry name" value="Acyl_Trfase/lysoPLipase"/>
</dbReference>
<dbReference type="InterPro" id="IPR002641">
    <property type="entry name" value="PNPLA_dom"/>
</dbReference>
<dbReference type="PANTHER" id="PTHR32176:SF85">
    <property type="entry name" value="PATATIN GROUP D-2"/>
    <property type="match status" value="1"/>
</dbReference>
<dbReference type="PANTHER" id="PTHR32176">
    <property type="entry name" value="XYLOSE ISOMERASE"/>
    <property type="match status" value="1"/>
</dbReference>
<dbReference type="Pfam" id="PF01734">
    <property type="entry name" value="Patatin"/>
    <property type="match status" value="1"/>
</dbReference>
<dbReference type="SUPFAM" id="SSF52151">
    <property type="entry name" value="FabD/lysophospholipase-like"/>
    <property type="match status" value="1"/>
</dbReference>
<dbReference type="PROSITE" id="PS51635">
    <property type="entry name" value="PNPLA"/>
    <property type="match status" value="1"/>
</dbReference>
<name>PAT04_SOLTU</name>